<comment type="function">
    <text evidence="1">Protease with a carboxypeptidase B-like function involved in the C-terminal processing of the lysine and arginine residues from protein precursors. Promotes cell fusion and is involved in the programmed cell death (By similarity).</text>
</comment>
<comment type="catalytic activity">
    <reaction>
        <text>Preferential release of a C-terminal arginine or lysine residue.</text>
        <dbReference type="EC" id="3.4.16.6"/>
    </reaction>
</comment>
<comment type="subcellular location">
    <subcellularLocation>
        <location evidence="1">Golgi apparatus</location>
        <location evidence="1">trans-Golgi network membrane</location>
        <topology evidence="1">Single-pass type I membrane protein</topology>
    </subcellularLocation>
</comment>
<comment type="similarity">
    <text evidence="4">Belongs to the peptidase S10 family.</text>
</comment>
<reference key="1">
    <citation type="journal article" date="2007" name="Nat. Biotechnol.">
        <title>Genome sequencing and analysis of the versatile cell factory Aspergillus niger CBS 513.88.</title>
        <authorList>
            <person name="Pel H.J."/>
            <person name="de Winde J.H."/>
            <person name="Archer D.B."/>
            <person name="Dyer P.S."/>
            <person name="Hofmann G."/>
            <person name="Schaap P.J."/>
            <person name="Turner G."/>
            <person name="de Vries R.P."/>
            <person name="Albang R."/>
            <person name="Albermann K."/>
            <person name="Andersen M.R."/>
            <person name="Bendtsen J.D."/>
            <person name="Benen J.A.E."/>
            <person name="van den Berg M."/>
            <person name="Breestraat S."/>
            <person name="Caddick M.X."/>
            <person name="Contreras R."/>
            <person name="Cornell M."/>
            <person name="Coutinho P.M."/>
            <person name="Danchin E.G.J."/>
            <person name="Debets A.J.M."/>
            <person name="Dekker P."/>
            <person name="van Dijck P.W.M."/>
            <person name="van Dijk A."/>
            <person name="Dijkhuizen L."/>
            <person name="Driessen A.J.M."/>
            <person name="d'Enfert C."/>
            <person name="Geysens S."/>
            <person name="Goosen C."/>
            <person name="Groot G.S.P."/>
            <person name="de Groot P.W.J."/>
            <person name="Guillemette T."/>
            <person name="Henrissat B."/>
            <person name="Herweijer M."/>
            <person name="van den Hombergh J.P.T.W."/>
            <person name="van den Hondel C.A.M.J.J."/>
            <person name="van der Heijden R.T.J.M."/>
            <person name="van der Kaaij R.M."/>
            <person name="Klis F.M."/>
            <person name="Kools H.J."/>
            <person name="Kubicek C.P."/>
            <person name="van Kuyk P.A."/>
            <person name="Lauber J."/>
            <person name="Lu X."/>
            <person name="van der Maarel M.J.E.C."/>
            <person name="Meulenberg R."/>
            <person name="Menke H."/>
            <person name="Mortimer M.A."/>
            <person name="Nielsen J."/>
            <person name="Oliver S.G."/>
            <person name="Olsthoorn M."/>
            <person name="Pal K."/>
            <person name="van Peij N.N.M.E."/>
            <person name="Ram A.F.J."/>
            <person name="Rinas U."/>
            <person name="Roubos J.A."/>
            <person name="Sagt C.M.J."/>
            <person name="Schmoll M."/>
            <person name="Sun J."/>
            <person name="Ussery D."/>
            <person name="Varga J."/>
            <person name="Vervecken W."/>
            <person name="van de Vondervoort P.J.J."/>
            <person name="Wedler H."/>
            <person name="Woesten H.A.B."/>
            <person name="Zeng A.-P."/>
            <person name="van Ooyen A.J.J."/>
            <person name="Visser J."/>
            <person name="Stam H."/>
        </authorList>
    </citation>
    <scope>NUCLEOTIDE SEQUENCE [LARGE SCALE GENOMIC DNA]</scope>
    <source>
        <strain>ATCC MYA-4892 / CBS 513.88 / FGSC A1513</strain>
    </source>
</reference>
<accession>A2QPW5</accession>
<dbReference type="EC" id="3.4.16.6"/>
<dbReference type="EMBL" id="AM270157">
    <property type="protein sequence ID" value="CAK45195.1"/>
    <property type="molecule type" value="Genomic_DNA"/>
</dbReference>
<dbReference type="RefSeq" id="XP_001392161.2">
    <property type="nucleotide sequence ID" value="XM_001392124.2"/>
</dbReference>
<dbReference type="SMR" id="A2QPW5"/>
<dbReference type="ESTHER" id="aspnc-kex1">
    <property type="family name" value="Carboxypeptidase_S10"/>
</dbReference>
<dbReference type="GlyCosmos" id="A2QPW5">
    <property type="glycosylation" value="4 sites, No reported glycans"/>
</dbReference>
<dbReference type="EnsemblFungi" id="CAK45195">
    <property type="protein sequence ID" value="CAK45195"/>
    <property type="gene ID" value="An08g00430"/>
</dbReference>
<dbReference type="GeneID" id="4982357"/>
<dbReference type="KEGG" id="ang:An08g00430"/>
<dbReference type="HOGENOM" id="CLU_008523_11_0_1"/>
<dbReference type="Proteomes" id="UP000006706">
    <property type="component" value="Chromosome 8R"/>
</dbReference>
<dbReference type="GO" id="GO:0016020">
    <property type="term" value="C:membrane"/>
    <property type="evidence" value="ECO:0007669"/>
    <property type="project" value="UniProtKB-KW"/>
</dbReference>
<dbReference type="GO" id="GO:0005802">
    <property type="term" value="C:trans-Golgi network"/>
    <property type="evidence" value="ECO:0007669"/>
    <property type="project" value="TreeGrafter"/>
</dbReference>
<dbReference type="GO" id="GO:0004185">
    <property type="term" value="F:serine-type carboxypeptidase activity"/>
    <property type="evidence" value="ECO:0007669"/>
    <property type="project" value="UniProtKB-EC"/>
</dbReference>
<dbReference type="GO" id="GO:0006915">
    <property type="term" value="P:apoptotic process"/>
    <property type="evidence" value="ECO:0007669"/>
    <property type="project" value="UniProtKB-KW"/>
</dbReference>
<dbReference type="GO" id="GO:0006508">
    <property type="term" value="P:proteolysis"/>
    <property type="evidence" value="ECO:0007669"/>
    <property type="project" value="UniProtKB-KW"/>
</dbReference>
<dbReference type="FunFam" id="3.40.50.1820:FF:000121">
    <property type="entry name" value="Carboxypeptidase D"/>
    <property type="match status" value="1"/>
</dbReference>
<dbReference type="Gene3D" id="3.40.50.1820">
    <property type="entry name" value="alpha/beta hydrolase"/>
    <property type="match status" value="1"/>
</dbReference>
<dbReference type="InterPro" id="IPR029058">
    <property type="entry name" value="AB_hydrolase_fold"/>
</dbReference>
<dbReference type="InterPro" id="IPR001563">
    <property type="entry name" value="Peptidase_S10"/>
</dbReference>
<dbReference type="InterPro" id="IPR033124">
    <property type="entry name" value="Ser_caboxypep_his_AS"/>
</dbReference>
<dbReference type="InterPro" id="IPR018202">
    <property type="entry name" value="Ser_caboxypep_ser_AS"/>
</dbReference>
<dbReference type="PANTHER" id="PTHR11802:SF190">
    <property type="entry name" value="PHEROMONE-PROCESSING CARBOXYPEPTIDASE KEX1"/>
    <property type="match status" value="1"/>
</dbReference>
<dbReference type="PANTHER" id="PTHR11802">
    <property type="entry name" value="SERINE PROTEASE FAMILY S10 SERINE CARBOXYPEPTIDASE"/>
    <property type="match status" value="1"/>
</dbReference>
<dbReference type="Pfam" id="PF00450">
    <property type="entry name" value="Peptidase_S10"/>
    <property type="match status" value="1"/>
</dbReference>
<dbReference type="PRINTS" id="PR00724">
    <property type="entry name" value="CRBOXYPTASEC"/>
</dbReference>
<dbReference type="SUPFAM" id="SSF53474">
    <property type="entry name" value="alpha/beta-Hydrolases"/>
    <property type="match status" value="1"/>
</dbReference>
<dbReference type="PROSITE" id="PS00560">
    <property type="entry name" value="CARBOXYPEPT_SER_HIS"/>
    <property type="match status" value="1"/>
</dbReference>
<dbReference type="PROSITE" id="PS00131">
    <property type="entry name" value="CARBOXYPEPT_SER_SER"/>
    <property type="match status" value="1"/>
</dbReference>
<keyword id="KW-0053">Apoptosis</keyword>
<keyword id="KW-0121">Carboxypeptidase</keyword>
<keyword id="KW-0325">Glycoprotein</keyword>
<keyword id="KW-0333">Golgi apparatus</keyword>
<keyword id="KW-0378">Hydrolase</keyword>
<keyword id="KW-0472">Membrane</keyword>
<keyword id="KW-0645">Protease</keyword>
<keyword id="KW-1185">Reference proteome</keyword>
<keyword id="KW-0732">Signal</keyword>
<keyword id="KW-0812">Transmembrane</keyword>
<keyword id="KW-1133">Transmembrane helix</keyword>
<sequence>MASWLLSTLLFLSPSLVSAKSAADYYVHSLPGAPEGPLLKMHAGHIEVDPQNNGNLFFWHYQNRHIANRQRTVIWLNGGPGCSSMDGALMEVGPYRLKDNETLTYNEGSWDEFANLLFVDQPVGTGFSYVNTDSYLHELDEMSAQFIVFLEEWFRLFPEYERDDIYIAGESYAGQHIPYIAKAIQERNKNVQGKTIASWNLKGLLIGNGWISPNEQYMSYLPYAYEEGLIKEGSRTAKELEVLQSVCKSRLETGKNKVHLNDCEKVMNALLDKTVEDNKCLNMYDIRLRDTTDACGMNWPTDLEDVKPYLQREDVVKALNINPEKKSGWVECSGAVSSAFNPQKSPPSVQLLPGLLESGLQILLFSGDKDLICNHVGTEQLINNMKWNGGTGFETSPGVWAPRHDWSFEGEPAGIYQYARNLTYVLIYNASHMVPYDLPRQSRDMLDRFMNVDIASIGGSPADSRIDGEKLPQTSVGGHPNSTAAEEQEKERIKETEWKAYAKSGEAVLLVVIIGVLVWGFFIWRSRRRHQGYRGVWHKDMSGSSVLERFHNKRTGGADVEAGDFDEAELDDLHSPDLEREHYAVGEDSDEDDISRQHSQQASRAGGSHNLS</sequence>
<proteinExistence type="inferred from homology"/>
<feature type="signal peptide" evidence="2">
    <location>
        <begin position="1"/>
        <end position="19"/>
    </location>
</feature>
<feature type="chain" id="PRO_5000220240" description="Pheromone-processing carboxypeptidase kex1">
    <location>
        <begin position="20"/>
        <end position="612"/>
    </location>
</feature>
<feature type="topological domain" description="Lumenal" evidence="2">
    <location>
        <begin position="20"/>
        <end position="503"/>
    </location>
</feature>
<feature type="transmembrane region" description="Helical" evidence="2">
    <location>
        <begin position="504"/>
        <end position="524"/>
    </location>
</feature>
<feature type="topological domain" description="Cytoplasmic" evidence="2">
    <location>
        <begin position="525"/>
        <end position="612"/>
    </location>
</feature>
<feature type="region of interest" description="Disordered" evidence="3">
    <location>
        <begin position="460"/>
        <end position="489"/>
    </location>
</feature>
<feature type="region of interest" description="Disordered" evidence="3">
    <location>
        <begin position="557"/>
        <end position="612"/>
    </location>
</feature>
<feature type="compositionally biased region" description="Polar residues" evidence="3">
    <location>
        <begin position="472"/>
        <end position="485"/>
    </location>
</feature>
<feature type="compositionally biased region" description="Acidic residues" evidence="3">
    <location>
        <begin position="561"/>
        <end position="570"/>
    </location>
</feature>
<feature type="compositionally biased region" description="Basic and acidic residues" evidence="3">
    <location>
        <begin position="571"/>
        <end position="585"/>
    </location>
</feature>
<feature type="compositionally biased region" description="Polar residues" evidence="3">
    <location>
        <begin position="597"/>
        <end position="612"/>
    </location>
</feature>
<feature type="active site" evidence="1">
    <location>
        <position position="171"/>
    </location>
</feature>
<feature type="active site" evidence="1">
    <location>
        <position position="370"/>
    </location>
</feature>
<feature type="active site" evidence="1">
    <location>
        <position position="432"/>
    </location>
</feature>
<feature type="glycosylation site" description="N-linked (GlcNAc...) asparagine" evidence="2">
    <location>
        <position position="100"/>
    </location>
</feature>
<feature type="glycosylation site" description="N-linked (GlcNAc...) asparagine" evidence="2">
    <location>
        <position position="421"/>
    </location>
</feature>
<feature type="glycosylation site" description="N-linked (GlcNAc...) asparagine" evidence="2">
    <location>
        <position position="429"/>
    </location>
</feature>
<feature type="glycosylation site" description="N-linked (GlcNAc...) asparagine" evidence="2">
    <location>
        <position position="481"/>
    </location>
</feature>
<organism>
    <name type="scientific">Aspergillus niger (strain ATCC MYA-4892 / CBS 513.88 / FGSC A1513)</name>
    <dbReference type="NCBI Taxonomy" id="425011"/>
    <lineage>
        <taxon>Eukaryota</taxon>
        <taxon>Fungi</taxon>
        <taxon>Dikarya</taxon>
        <taxon>Ascomycota</taxon>
        <taxon>Pezizomycotina</taxon>
        <taxon>Eurotiomycetes</taxon>
        <taxon>Eurotiomycetidae</taxon>
        <taxon>Eurotiales</taxon>
        <taxon>Aspergillaceae</taxon>
        <taxon>Aspergillus</taxon>
        <taxon>Aspergillus subgen. Circumdati</taxon>
    </lineage>
</organism>
<gene>
    <name type="primary">kex1</name>
    <name type="ORF">An08g00430</name>
</gene>
<name>KEX1_ASPNC</name>
<evidence type="ECO:0000250" key="1"/>
<evidence type="ECO:0000255" key="2"/>
<evidence type="ECO:0000256" key="3">
    <source>
        <dbReference type="SAM" id="MobiDB-lite"/>
    </source>
</evidence>
<evidence type="ECO:0000305" key="4"/>
<protein>
    <recommendedName>
        <fullName>Pheromone-processing carboxypeptidase kex1</fullName>
        <ecNumber>3.4.16.6</ecNumber>
    </recommendedName>
    <alternativeName>
        <fullName>Carboxypeptidase D</fullName>
    </alternativeName>
</protein>